<feature type="chain" id="PRO_0000232765" description="NADH-ubiquinone oxidoreductase chain 6">
    <location>
        <begin position="1"/>
        <end position="175"/>
    </location>
</feature>
<feature type="transmembrane region" description="Helical" evidence="3">
    <location>
        <begin position="1"/>
        <end position="21"/>
    </location>
</feature>
<feature type="transmembrane region" description="Helical" evidence="3">
    <location>
        <begin position="24"/>
        <end position="44"/>
    </location>
</feature>
<feature type="transmembrane region" description="Helical" evidence="3">
    <location>
        <begin position="51"/>
        <end position="71"/>
    </location>
</feature>
<feature type="transmembrane region" description="Helical" evidence="3">
    <location>
        <begin position="87"/>
        <end position="107"/>
    </location>
</feature>
<feature type="transmembrane region" description="Helical" evidence="3">
    <location>
        <begin position="113"/>
        <end position="133"/>
    </location>
</feature>
<feature type="transmembrane region" description="Helical" evidence="3">
    <location>
        <begin position="148"/>
        <end position="168"/>
    </location>
</feature>
<accession>Q38PR1</accession>
<name>NU6M_MAMPR</name>
<evidence type="ECO:0000250" key="1">
    <source>
        <dbReference type="UniProtKB" id="P03923"/>
    </source>
</evidence>
<evidence type="ECO:0000250" key="2">
    <source>
        <dbReference type="UniProtKB" id="P03924"/>
    </source>
</evidence>
<evidence type="ECO:0000255" key="3"/>
<evidence type="ECO:0000305" key="4"/>
<proteinExistence type="inferred from homology"/>
<geneLocation type="mitochondrion"/>
<reference key="1">
    <citation type="journal article" date="2006" name="Nature">
        <title>Multiplex amplification of the mammoth mitochondrial genome and the evolution of Elephantidae.</title>
        <authorList>
            <person name="Krause J."/>
            <person name="Dear P.H."/>
            <person name="Pollack J.L."/>
            <person name="Slatkin M."/>
            <person name="Spriggs H."/>
            <person name="Barnes I."/>
            <person name="Lister A.M."/>
            <person name="Ebersberger I."/>
            <person name="Paeaebo S."/>
            <person name="Hofreiter M."/>
        </authorList>
    </citation>
    <scope>NUCLEOTIDE SEQUENCE [GENOMIC DNA]</scope>
</reference>
<reference key="2">
    <citation type="journal article" date="2006" name="PLoS Biol.">
        <title>Complete mitochondrial genome and phylogeny of Pleistocene mammoth Mammuthus primigenius.</title>
        <authorList>
            <person name="Rogaev E.I."/>
            <person name="Moliaka Y.K."/>
            <person name="Malyarchuk B.A."/>
            <person name="Kondrashov F.A."/>
            <person name="Derenko M.V."/>
            <person name="Chumakov I."/>
            <person name="Grigorenko A.P."/>
        </authorList>
    </citation>
    <scope>NUCLEOTIDE SEQUENCE [GENOMIC DNA]</scope>
    <source>
        <tissue>Muscle</tissue>
    </source>
</reference>
<comment type="function">
    <text evidence="1">Core subunit of the mitochondrial membrane respiratory chain NADH dehydrogenase (Complex I) which catalyzes electron transfer from NADH through the respiratory chain, using ubiquinone as an electron acceptor. Essential for the catalytic activity and assembly of complex I.</text>
</comment>
<comment type="catalytic activity">
    <reaction evidence="1">
        <text>a ubiquinone + NADH + 5 H(+)(in) = a ubiquinol + NAD(+) + 4 H(+)(out)</text>
        <dbReference type="Rhea" id="RHEA:29091"/>
        <dbReference type="Rhea" id="RHEA-COMP:9565"/>
        <dbReference type="Rhea" id="RHEA-COMP:9566"/>
        <dbReference type="ChEBI" id="CHEBI:15378"/>
        <dbReference type="ChEBI" id="CHEBI:16389"/>
        <dbReference type="ChEBI" id="CHEBI:17976"/>
        <dbReference type="ChEBI" id="CHEBI:57540"/>
        <dbReference type="ChEBI" id="CHEBI:57945"/>
        <dbReference type="EC" id="7.1.1.2"/>
    </reaction>
</comment>
<comment type="subunit">
    <text evidence="2">Core subunit of respiratory chain NADH dehydrogenase (Complex I) which is composed of 45 different subunits.</text>
</comment>
<comment type="subcellular location">
    <subcellularLocation>
        <location evidence="2">Mitochondrion inner membrane</location>
        <topology evidence="3">Multi-pass membrane protein</topology>
    </subcellularLocation>
</comment>
<comment type="similarity">
    <text evidence="4">Belongs to the complex I subunit 6 family.</text>
</comment>
<sequence length="175" mass="19154">MMYIVFIMSVLYVVGFIGFSSKPSPVYGGMSLIVSGGLGCGIIMSSGGSFLGLVVFLVYLGGMMVVFGYTIAMATEEYPETWGSNVVVLSAFLVGLLMEIFMIVWLFSGEHELVGFYFGGLEDLVVLGEGSFGYVREDYSGGASLYSYGFWFLAMAGWMLFVSIFIAIEVTRKRY</sequence>
<keyword id="KW-0249">Electron transport</keyword>
<keyword id="KW-0952">Extinct organism protein</keyword>
<keyword id="KW-0472">Membrane</keyword>
<keyword id="KW-0496">Mitochondrion</keyword>
<keyword id="KW-0999">Mitochondrion inner membrane</keyword>
<keyword id="KW-0520">NAD</keyword>
<keyword id="KW-0679">Respiratory chain</keyword>
<keyword id="KW-1278">Translocase</keyword>
<keyword id="KW-0812">Transmembrane</keyword>
<keyword id="KW-1133">Transmembrane helix</keyword>
<keyword id="KW-0813">Transport</keyword>
<keyword id="KW-0830">Ubiquinone</keyword>
<gene>
    <name type="primary">MT-ND6</name>
    <name type="synonym">MTND6</name>
    <name type="synonym">NADH6</name>
    <name type="synonym">ND6</name>
</gene>
<organism>
    <name type="scientific">Mammuthus primigenius</name>
    <name type="common">Siberian woolly mammoth</name>
    <dbReference type="NCBI Taxonomy" id="37349"/>
    <lineage>
        <taxon>Eukaryota</taxon>
        <taxon>Metazoa</taxon>
        <taxon>Chordata</taxon>
        <taxon>Craniata</taxon>
        <taxon>Vertebrata</taxon>
        <taxon>Euteleostomi</taxon>
        <taxon>Mammalia</taxon>
        <taxon>Eutheria</taxon>
        <taxon>Afrotheria</taxon>
        <taxon>Proboscidea</taxon>
        <taxon>Elephantidae</taxon>
        <taxon>Mammuthus</taxon>
    </lineage>
</organism>
<protein>
    <recommendedName>
        <fullName>NADH-ubiquinone oxidoreductase chain 6</fullName>
        <ecNumber evidence="1">7.1.1.2</ecNumber>
    </recommendedName>
    <alternativeName>
        <fullName>NADH dehydrogenase subunit 6</fullName>
    </alternativeName>
</protein>
<dbReference type="EC" id="7.1.1.2" evidence="1"/>
<dbReference type="EMBL" id="DQ188829">
    <property type="protein sequence ID" value="ABA29795.1"/>
    <property type="molecule type" value="Genomic_DNA"/>
</dbReference>
<dbReference type="EMBL" id="DQ316067">
    <property type="protein sequence ID" value="ABC17889.1"/>
    <property type="molecule type" value="Genomic_DNA"/>
</dbReference>
<dbReference type="RefSeq" id="YP_398765.1">
    <property type="nucleotide sequence ID" value="NC_007596.2"/>
</dbReference>
<dbReference type="SMR" id="Q38PR1"/>
<dbReference type="GeneID" id="3773152"/>
<dbReference type="CTD" id="4541"/>
<dbReference type="GO" id="GO:0005743">
    <property type="term" value="C:mitochondrial inner membrane"/>
    <property type="evidence" value="ECO:0000250"/>
    <property type="project" value="UniProtKB"/>
</dbReference>
<dbReference type="GO" id="GO:0008137">
    <property type="term" value="F:NADH dehydrogenase (ubiquinone) activity"/>
    <property type="evidence" value="ECO:0000250"/>
    <property type="project" value="UniProtKB"/>
</dbReference>
<dbReference type="GO" id="GO:0006120">
    <property type="term" value="P:mitochondrial electron transport, NADH to ubiquinone"/>
    <property type="evidence" value="ECO:0000250"/>
    <property type="project" value="UniProtKB"/>
</dbReference>
<dbReference type="GO" id="GO:0032981">
    <property type="term" value="P:mitochondrial respiratory chain complex I assembly"/>
    <property type="evidence" value="ECO:0000250"/>
    <property type="project" value="UniProtKB"/>
</dbReference>
<dbReference type="Gene3D" id="1.20.120.1200">
    <property type="entry name" value="NADH-ubiquinone/plastoquinone oxidoreductase chain 6, subunit NuoJ"/>
    <property type="match status" value="1"/>
</dbReference>
<dbReference type="InterPro" id="IPR050269">
    <property type="entry name" value="ComplexI_Subunit6"/>
</dbReference>
<dbReference type="InterPro" id="IPR001457">
    <property type="entry name" value="NADH_UbQ/plastoQ_OxRdtase_su6"/>
</dbReference>
<dbReference type="InterPro" id="IPR042106">
    <property type="entry name" value="Nuo/plastoQ_OxRdtase_6_NuoJ"/>
</dbReference>
<dbReference type="PANTHER" id="PTHR11435">
    <property type="entry name" value="NADH UBIQUINONE OXIDOREDUCTASE SUBUNIT ND6"/>
    <property type="match status" value="1"/>
</dbReference>
<dbReference type="PANTHER" id="PTHR11435:SF1">
    <property type="entry name" value="NADH-UBIQUINONE OXIDOREDUCTASE CHAIN 6"/>
    <property type="match status" value="1"/>
</dbReference>
<dbReference type="Pfam" id="PF00499">
    <property type="entry name" value="Oxidored_q3"/>
    <property type="match status" value="1"/>
</dbReference>